<sequence>MATYLVGDLQGCYDELQLLLETVQFNPVQDKLYLVGDLVARGDKSLECLRFVKSLGAAAQMVLGNHDLHLISTALGIKKVSLQDHVEAIFTAPDFVELIDWLRHQPLLVHDEKCDFVMSHAGISPDWDLDTAKSCAREVENELQHGDYHYLISNMYDNQPDRWSADLQGLQRLRYSINVFTRMRFCYRDHRLDFACKASVEKAPQELIPWFNLDNPLFKVQNLVFGHWASLVDTPTPANIYALDTGCVWGNRMTMLRWEDKQYFVQGALKDYF</sequence>
<accession>B0URM8</accession>
<gene>
    <name evidence="1" type="primary">apaH</name>
    <name type="ordered locus">HSM_0466</name>
</gene>
<feature type="chain" id="PRO_1000077715" description="Bis(5'-nucleosyl)-tetraphosphatase, symmetrical">
    <location>
        <begin position="1"/>
        <end position="273"/>
    </location>
</feature>
<organism>
    <name type="scientific">Histophilus somni (strain 2336)</name>
    <name type="common">Haemophilus somnus</name>
    <dbReference type="NCBI Taxonomy" id="228400"/>
    <lineage>
        <taxon>Bacteria</taxon>
        <taxon>Pseudomonadati</taxon>
        <taxon>Pseudomonadota</taxon>
        <taxon>Gammaproteobacteria</taxon>
        <taxon>Pasteurellales</taxon>
        <taxon>Pasteurellaceae</taxon>
        <taxon>Histophilus</taxon>
    </lineage>
</organism>
<reference key="1">
    <citation type="submission" date="2008-02" db="EMBL/GenBank/DDBJ databases">
        <title>Complete sequence of Haemophilus somnus 2336.</title>
        <authorList>
            <consortium name="US DOE Joint Genome Institute"/>
            <person name="Siddaramappa S."/>
            <person name="Duncan A.J."/>
            <person name="Challacombe J.F."/>
            <person name="Rainey D."/>
            <person name="Gillaspy A.F."/>
            <person name="Carson M."/>
            <person name="Gipson J."/>
            <person name="Gipson M."/>
            <person name="Bruce D."/>
            <person name="Detter J.C."/>
            <person name="Han C.S."/>
            <person name="Land M."/>
            <person name="Tapia R."/>
            <person name="Thompson L.S."/>
            <person name="Orvis J."/>
            <person name="Zaitshik J."/>
            <person name="Barnes G."/>
            <person name="Brettin T.S."/>
            <person name="Dyer D.W."/>
            <person name="Inzana T.J."/>
        </authorList>
    </citation>
    <scope>NUCLEOTIDE SEQUENCE [LARGE SCALE GENOMIC DNA]</scope>
    <source>
        <strain>2336</strain>
    </source>
</reference>
<evidence type="ECO:0000255" key="1">
    <source>
        <dbReference type="HAMAP-Rule" id="MF_00199"/>
    </source>
</evidence>
<proteinExistence type="inferred from homology"/>
<name>APAH_HISS2</name>
<comment type="function">
    <text evidence="1">Hydrolyzes diadenosine 5',5'''-P1,P4-tetraphosphate to yield ADP.</text>
</comment>
<comment type="catalytic activity">
    <reaction evidence="1">
        <text>P(1),P(4)-bis(5'-adenosyl) tetraphosphate + H2O = 2 ADP + 2 H(+)</text>
        <dbReference type="Rhea" id="RHEA:24252"/>
        <dbReference type="ChEBI" id="CHEBI:15377"/>
        <dbReference type="ChEBI" id="CHEBI:15378"/>
        <dbReference type="ChEBI" id="CHEBI:58141"/>
        <dbReference type="ChEBI" id="CHEBI:456216"/>
        <dbReference type="EC" id="3.6.1.41"/>
    </reaction>
</comment>
<comment type="similarity">
    <text evidence="1">Belongs to the Ap4A hydrolase family.</text>
</comment>
<dbReference type="EC" id="3.6.1.41" evidence="1"/>
<dbReference type="EMBL" id="CP000947">
    <property type="protein sequence ID" value="ACA32111.1"/>
    <property type="molecule type" value="Genomic_DNA"/>
</dbReference>
<dbReference type="RefSeq" id="WP_012341303.1">
    <property type="nucleotide sequence ID" value="NC_010519.1"/>
</dbReference>
<dbReference type="SMR" id="B0URM8"/>
<dbReference type="STRING" id="228400.HSM_0466"/>
<dbReference type="GeneID" id="31486749"/>
<dbReference type="KEGG" id="hsm:HSM_0466"/>
<dbReference type="HOGENOM" id="CLU_056184_2_0_6"/>
<dbReference type="GO" id="GO:0008803">
    <property type="term" value="F:bis(5'-nucleosyl)-tetraphosphatase (symmetrical) activity"/>
    <property type="evidence" value="ECO:0007669"/>
    <property type="project" value="UniProtKB-UniRule"/>
</dbReference>
<dbReference type="CDD" id="cd07422">
    <property type="entry name" value="MPP_ApaH"/>
    <property type="match status" value="1"/>
</dbReference>
<dbReference type="Gene3D" id="3.60.21.10">
    <property type="match status" value="1"/>
</dbReference>
<dbReference type="HAMAP" id="MF_00199">
    <property type="entry name" value="ApaH"/>
    <property type="match status" value="1"/>
</dbReference>
<dbReference type="InterPro" id="IPR004617">
    <property type="entry name" value="ApaH"/>
</dbReference>
<dbReference type="InterPro" id="IPR004843">
    <property type="entry name" value="Calcineurin-like_PHP_ApaH"/>
</dbReference>
<dbReference type="InterPro" id="IPR029052">
    <property type="entry name" value="Metallo-depent_PP-like"/>
</dbReference>
<dbReference type="NCBIfam" id="TIGR00668">
    <property type="entry name" value="apaH"/>
    <property type="match status" value="1"/>
</dbReference>
<dbReference type="NCBIfam" id="NF001204">
    <property type="entry name" value="PRK00166.1"/>
    <property type="match status" value="1"/>
</dbReference>
<dbReference type="PANTHER" id="PTHR40942">
    <property type="match status" value="1"/>
</dbReference>
<dbReference type="PANTHER" id="PTHR40942:SF4">
    <property type="entry name" value="CYTOCHROME C5"/>
    <property type="match status" value="1"/>
</dbReference>
<dbReference type="Pfam" id="PF00149">
    <property type="entry name" value="Metallophos"/>
    <property type="match status" value="1"/>
</dbReference>
<dbReference type="PIRSF" id="PIRSF000903">
    <property type="entry name" value="B5n-ttraPtase_sm"/>
    <property type="match status" value="1"/>
</dbReference>
<dbReference type="SUPFAM" id="SSF56300">
    <property type="entry name" value="Metallo-dependent phosphatases"/>
    <property type="match status" value="1"/>
</dbReference>
<protein>
    <recommendedName>
        <fullName evidence="1">Bis(5'-nucleosyl)-tetraphosphatase, symmetrical</fullName>
        <ecNumber evidence="1">3.6.1.41</ecNumber>
    </recommendedName>
    <alternativeName>
        <fullName evidence="1">Ap4A hydrolase</fullName>
    </alternativeName>
    <alternativeName>
        <fullName evidence="1">Diadenosine 5',5'''-P1,P4-tetraphosphate pyrophosphohydrolase</fullName>
    </alternativeName>
    <alternativeName>
        <fullName evidence="1">Diadenosine tetraphosphatase</fullName>
    </alternativeName>
</protein>
<keyword id="KW-0378">Hydrolase</keyword>